<comment type="function">
    <text evidence="1">Required for normal Golgi function.</text>
</comment>
<comment type="subunit">
    <text evidence="3 6">Component of the conserved oligomeric Golgi complex which is composed of eight different subunits and is required for normal Golgi morphology and localization (Probable). Interacts with COG5, COG7 and COG8 (PubMed:27448097).</text>
</comment>
<comment type="subcellular location">
    <subcellularLocation>
        <location evidence="5">Golgi apparatus membrane</location>
        <topology evidence="5">Peripheral membrane protein</topology>
    </subcellularLocation>
</comment>
<comment type="similarity">
    <text evidence="5">Belongs to the COG6 family.</text>
</comment>
<comment type="sequence caution" evidence="5">
    <conflict type="erroneous gene model prediction">
        <sequence resource="EMBL-CDS" id="AAG50721"/>
    </conflict>
</comment>
<accession>Q6NMI3</accession>
<accession>Q9C6R8</accession>
<sequence>MASTVGLAPGLSRKLKKVLDCRTDSPDLVASLNALSSFYDENSAHARRNLRSTIEKRALQINSEFLNAADSTQIALDRVEEEVNALADCCDKIAAALSSSAATTSDIISTTERLKQELEVTTQRQEIVNCFLRDYQLSNEEIKALREDELNENFFQALSHVQEIHSNCKLLLRTHHQRAGLELMDMMAVYQEGAYERLCRWVQAECRKLGDTDNPEVSELLRTAVRCLKERPVLFKYCAEEVGNLRHNALFRRFISALTRGGPGGMPRPIEVHAHDPLRYVGDMLGWLHQALASERELVHALFDIDSADHQSNAKNTSENIALKAGESDFTFVLDRIFEGVCRPFKVRVEQVLQSQPSLIISYKLTNTLEFYSYTISDLLGRDTALCNTIGMVKDAAQKTFFDILKTRGEKLLRYPPPVAVDLSPPPAVREGVSLTLEIIENYNSMMVSASGEKPAFDPVLSALLDPIIKMCEQAAEAHKSKKSGQLPRRSRTSSDSSQLTSVDALLSSSPSPPQNNETPSKIFLINCLCAIQQPLLRHDVASQYVTNIGLMIENHINLLVQNEVDTLLHKCGLSDKMQIFRSSTSELPLSERQDTSPAMLSECLKAFFGLVLGSEGSLPEFEQIQVPKLRSEACVRVAKTLAEAYEVIYQAVTDQQNGYPDPKSLARHPPDQIRTILGI</sequence>
<reference key="1">
    <citation type="journal article" date="2000" name="Nature">
        <title>Sequence and analysis of chromosome 1 of the plant Arabidopsis thaliana.</title>
        <authorList>
            <person name="Theologis A."/>
            <person name="Ecker J.R."/>
            <person name="Palm C.J."/>
            <person name="Federspiel N.A."/>
            <person name="Kaul S."/>
            <person name="White O."/>
            <person name="Alonso J."/>
            <person name="Altafi H."/>
            <person name="Araujo R."/>
            <person name="Bowman C.L."/>
            <person name="Brooks S.Y."/>
            <person name="Buehler E."/>
            <person name="Chan A."/>
            <person name="Chao Q."/>
            <person name="Chen H."/>
            <person name="Cheuk R.F."/>
            <person name="Chin C.W."/>
            <person name="Chung M.K."/>
            <person name="Conn L."/>
            <person name="Conway A.B."/>
            <person name="Conway A.R."/>
            <person name="Creasy T.H."/>
            <person name="Dewar K."/>
            <person name="Dunn P."/>
            <person name="Etgu P."/>
            <person name="Feldblyum T.V."/>
            <person name="Feng J.-D."/>
            <person name="Fong B."/>
            <person name="Fujii C.Y."/>
            <person name="Gill J.E."/>
            <person name="Goldsmith A.D."/>
            <person name="Haas B."/>
            <person name="Hansen N.F."/>
            <person name="Hughes B."/>
            <person name="Huizar L."/>
            <person name="Hunter J.L."/>
            <person name="Jenkins J."/>
            <person name="Johnson-Hopson C."/>
            <person name="Khan S."/>
            <person name="Khaykin E."/>
            <person name="Kim C.J."/>
            <person name="Koo H.L."/>
            <person name="Kremenetskaia I."/>
            <person name="Kurtz D.B."/>
            <person name="Kwan A."/>
            <person name="Lam B."/>
            <person name="Langin-Hooper S."/>
            <person name="Lee A."/>
            <person name="Lee J.M."/>
            <person name="Lenz C.A."/>
            <person name="Li J.H."/>
            <person name="Li Y.-P."/>
            <person name="Lin X."/>
            <person name="Liu S.X."/>
            <person name="Liu Z.A."/>
            <person name="Luros J.S."/>
            <person name="Maiti R."/>
            <person name="Marziali A."/>
            <person name="Militscher J."/>
            <person name="Miranda M."/>
            <person name="Nguyen M."/>
            <person name="Nierman W.C."/>
            <person name="Osborne B.I."/>
            <person name="Pai G."/>
            <person name="Peterson J."/>
            <person name="Pham P.K."/>
            <person name="Rizzo M."/>
            <person name="Rooney T."/>
            <person name="Rowley D."/>
            <person name="Sakano H."/>
            <person name="Salzberg S.L."/>
            <person name="Schwartz J.R."/>
            <person name="Shinn P."/>
            <person name="Southwick A.M."/>
            <person name="Sun H."/>
            <person name="Tallon L.J."/>
            <person name="Tambunga G."/>
            <person name="Toriumi M.J."/>
            <person name="Town C.D."/>
            <person name="Utterback T."/>
            <person name="Van Aken S."/>
            <person name="Vaysberg M."/>
            <person name="Vysotskaia V.S."/>
            <person name="Walker M."/>
            <person name="Wu D."/>
            <person name="Yu G."/>
            <person name="Fraser C.M."/>
            <person name="Venter J.C."/>
            <person name="Davis R.W."/>
        </authorList>
    </citation>
    <scope>NUCLEOTIDE SEQUENCE [LARGE SCALE GENOMIC DNA]</scope>
    <source>
        <strain>cv. Columbia</strain>
    </source>
</reference>
<reference key="2">
    <citation type="journal article" date="2017" name="Plant J.">
        <title>Araport11: a complete reannotation of the Arabidopsis thaliana reference genome.</title>
        <authorList>
            <person name="Cheng C.Y."/>
            <person name="Krishnakumar V."/>
            <person name="Chan A.P."/>
            <person name="Thibaud-Nissen F."/>
            <person name="Schobel S."/>
            <person name="Town C.D."/>
        </authorList>
    </citation>
    <scope>GENOME REANNOTATION</scope>
    <source>
        <strain>cv. Columbia</strain>
    </source>
</reference>
<reference key="3">
    <citation type="submission" date="2004-03" db="EMBL/GenBank/DDBJ databases">
        <title>Arabidopsis ORF clones.</title>
        <authorList>
            <person name="Cheuk R.F."/>
            <person name="Chen H."/>
            <person name="Kim C.J."/>
            <person name="Shinn P."/>
            <person name="Carninci P."/>
            <person name="Hayashizaki Y."/>
            <person name="Ishida J."/>
            <person name="Kamiya A."/>
            <person name="Kawai J."/>
            <person name="Narusaka M."/>
            <person name="Sakurai T."/>
            <person name="Satou M."/>
            <person name="Seki M."/>
            <person name="Shinozaki K."/>
            <person name="Ecker J.R."/>
        </authorList>
    </citation>
    <scope>NUCLEOTIDE SEQUENCE [LARGE SCALE MRNA]</scope>
    <source>
        <strain>cv. Columbia</strain>
    </source>
</reference>
<reference key="4">
    <citation type="submission" date="2006-07" db="EMBL/GenBank/DDBJ databases">
        <title>Large-scale analysis of RIKEN Arabidopsis full-length (RAFL) cDNAs.</title>
        <authorList>
            <person name="Totoki Y."/>
            <person name="Seki M."/>
            <person name="Ishida J."/>
            <person name="Nakajima M."/>
            <person name="Enju A."/>
            <person name="Kamiya A."/>
            <person name="Narusaka M."/>
            <person name="Shin-i T."/>
            <person name="Nakagawa M."/>
            <person name="Sakamoto N."/>
            <person name="Oishi K."/>
            <person name="Kohara Y."/>
            <person name="Kobayashi M."/>
            <person name="Toyoda A."/>
            <person name="Sakaki Y."/>
            <person name="Sakurai T."/>
            <person name="Iida K."/>
            <person name="Akiyama K."/>
            <person name="Satou M."/>
            <person name="Toyoda T."/>
            <person name="Konagaya A."/>
            <person name="Carninci P."/>
            <person name="Kawai J."/>
            <person name="Hayashizaki Y."/>
            <person name="Shinozaki K."/>
        </authorList>
    </citation>
    <scope>NUCLEOTIDE SEQUENCE [LARGE SCALE MRNA]</scope>
    <source>
        <strain>cv. Columbia</strain>
    </source>
</reference>
<reference key="5">
    <citation type="journal article" date="2012" name="Mol. Cell. Proteomics">
        <title>Comparative large-scale characterisation of plant vs. mammal proteins reveals similar and idiosyncratic N-alpha acetylation features.</title>
        <authorList>
            <person name="Bienvenut W.V."/>
            <person name="Sumpton D."/>
            <person name="Martinez A."/>
            <person name="Lilla S."/>
            <person name="Espagne C."/>
            <person name="Meinnel T."/>
            <person name="Giglione C."/>
        </authorList>
    </citation>
    <scope>IDENTIFICATION BY MASS SPECTROMETRY [LARGE SCALE ANALYSIS]</scope>
</reference>
<reference key="6">
    <citation type="journal article" date="2016" name="PLoS Genet.">
        <title>Arabidopsis COG complex subunits COG3 and COG8 modulate golgi morphology, vesicle trafficking homeostasis and are essential for pollen tube growth.</title>
        <authorList>
            <person name="Tan X."/>
            <person name="Cao K."/>
            <person name="Liu F."/>
            <person name="Li Y."/>
            <person name="Li P."/>
            <person name="Gao C."/>
            <person name="Ding Y."/>
            <person name="Lan Z."/>
            <person name="Shi Z."/>
            <person name="Rui Q."/>
            <person name="Feng Y."/>
            <person name="Liu Y."/>
            <person name="Zhao Y."/>
            <person name="Wu C."/>
            <person name="Zhang Q."/>
            <person name="Li Y."/>
            <person name="Jiang L."/>
            <person name="Bao Y."/>
        </authorList>
    </citation>
    <scope>INTERACTION WITH COG5; COG7 AND COG8</scope>
    <scope>GENE FAMILY</scope>
    <scope>NOMENCLATURE</scope>
</reference>
<protein>
    <recommendedName>
        <fullName evidence="4">Conserved oligomeric Golgi complex subunit 6</fullName>
        <shortName evidence="4">COG complex subunit 6</shortName>
    </recommendedName>
    <alternativeName>
        <fullName evidence="4">Component of oligomeric Golgi complex 6</fullName>
    </alternativeName>
</protein>
<feature type="chain" id="PRO_0000448528" description="Conserved oligomeric Golgi complex subunit 6">
    <location>
        <begin position="1"/>
        <end position="680"/>
    </location>
</feature>
<feature type="region of interest" description="Disordered" evidence="2">
    <location>
        <begin position="479"/>
        <end position="517"/>
    </location>
</feature>
<evidence type="ECO:0000250" key="1">
    <source>
        <dbReference type="UniProtKB" id="P53959"/>
    </source>
</evidence>
<evidence type="ECO:0000256" key="2">
    <source>
        <dbReference type="SAM" id="MobiDB-lite"/>
    </source>
</evidence>
<evidence type="ECO:0000269" key="3">
    <source>
    </source>
</evidence>
<evidence type="ECO:0000303" key="4">
    <source>
    </source>
</evidence>
<evidence type="ECO:0000305" key="5"/>
<evidence type="ECO:0000305" key="6">
    <source>
    </source>
</evidence>
<evidence type="ECO:0000312" key="7">
    <source>
        <dbReference type="Araport" id="AT1G31780"/>
    </source>
</evidence>
<evidence type="ECO:0000312" key="8">
    <source>
        <dbReference type="EMBL" id="AAG50721.1"/>
    </source>
</evidence>
<keyword id="KW-0333">Golgi apparatus</keyword>
<keyword id="KW-0472">Membrane</keyword>
<keyword id="KW-0653">Protein transport</keyword>
<keyword id="KW-1185">Reference proteome</keyword>
<keyword id="KW-0813">Transport</keyword>
<name>COG6_ARATH</name>
<organism>
    <name type="scientific">Arabidopsis thaliana</name>
    <name type="common">Mouse-ear cress</name>
    <dbReference type="NCBI Taxonomy" id="3702"/>
    <lineage>
        <taxon>Eukaryota</taxon>
        <taxon>Viridiplantae</taxon>
        <taxon>Streptophyta</taxon>
        <taxon>Embryophyta</taxon>
        <taxon>Tracheophyta</taxon>
        <taxon>Spermatophyta</taxon>
        <taxon>Magnoliopsida</taxon>
        <taxon>eudicotyledons</taxon>
        <taxon>Gunneridae</taxon>
        <taxon>Pentapetalae</taxon>
        <taxon>rosids</taxon>
        <taxon>malvids</taxon>
        <taxon>Brassicales</taxon>
        <taxon>Brassicaceae</taxon>
        <taxon>Camelineae</taxon>
        <taxon>Arabidopsis</taxon>
    </lineage>
</organism>
<dbReference type="EMBL" id="AC079041">
    <property type="protein sequence ID" value="AAG50721.1"/>
    <property type="status" value="ALT_SEQ"/>
    <property type="molecule type" value="Genomic_DNA"/>
</dbReference>
<dbReference type="EMBL" id="CP002684">
    <property type="protein sequence ID" value="AEE31392.1"/>
    <property type="molecule type" value="Genomic_DNA"/>
</dbReference>
<dbReference type="EMBL" id="BT011677">
    <property type="protein sequence ID" value="AAS49040.1"/>
    <property type="molecule type" value="mRNA"/>
</dbReference>
<dbReference type="EMBL" id="AK226330">
    <property type="protein sequence ID" value="BAE98481.1"/>
    <property type="molecule type" value="mRNA"/>
</dbReference>
<dbReference type="PIR" id="D86441">
    <property type="entry name" value="D86441"/>
</dbReference>
<dbReference type="RefSeq" id="NP_174458.2">
    <property type="nucleotide sequence ID" value="NM_102912.5"/>
</dbReference>
<dbReference type="SMR" id="Q6NMI3"/>
<dbReference type="FunCoup" id="Q6NMI3">
    <property type="interactions" value="4411"/>
</dbReference>
<dbReference type="IntAct" id="Q6NMI3">
    <property type="interactions" value="7"/>
</dbReference>
<dbReference type="STRING" id="3702.Q6NMI3"/>
<dbReference type="iPTMnet" id="Q6NMI3"/>
<dbReference type="PaxDb" id="3702-AT1G31780.1"/>
<dbReference type="ProteomicsDB" id="179360"/>
<dbReference type="EnsemblPlants" id="AT1G31780.1">
    <property type="protein sequence ID" value="AT1G31780.1"/>
    <property type="gene ID" value="AT1G31780"/>
</dbReference>
<dbReference type="GeneID" id="840065"/>
<dbReference type="Gramene" id="AT1G31780.1">
    <property type="protein sequence ID" value="AT1G31780.1"/>
    <property type="gene ID" value="AT1G31780"/>
</dbReference>
<dbReference type="KEGG" id="ath:AT1G31780"/>
<dbReference type="Araport" id="AT1G31780"/>
<dbReference type="TAIR" id="AT1G31780"/>
<dbReference type="eggNOG" id="KOG3758">
    <property type="taxonomic scope" value="Eukaryota"/>
</dbReference>
<dbReference type="HOGENOM" id="CLU_011361_3_0_1"/>
<dbReference type="InParanoid" id="Q6NMI3"/>
<dbReference type="OMA" id="HSCLDFF"/>
<dbReference type="PhylomeDB" id="Q6NMI3"/>
<dbReference type="PRO" id="PR:Q6NMI3"/>
<dbReference type="Proteomes" id="UP000006548">
    <property type="component" value="Chromosome 1"/>
</dbReference>
<dbReference type="ExpressionAtlas" id="Q6NMI3">
    <property type="expression patterns" value="baseline and differential"/>
</dbReference>
<dbReference type="GO" id="GO:0005794">
    <property type="term" value="C:Golgi apparatus"/>
    <property type="evidence" value="ECO:0000314"/>
    <property type="project" value="TAIR"/>
</dbReference>
<dbReference type="GO" id="GO:0000139">
    <property type="term" value="C:Golgi membrane"/>
    <property type="evidence" value="ECO:0007669"/>
    <property type="project" value="UniProtKB-SubCell"/>
</dbReference>
<dbReference type="GO" id="GO:0017119">
    <property type="term" value="C:Golgi transport complex"/>
    <property type="evidence" value="ECO:0007669"/>
    <property type="project" value="InterPro"/>
</dbReference>
<dbReference type="GO" id="GO:0007030">
    <property type="term" value="P:Golgi organization"/>
    <property type="evidence" value="ECO:0000315"/>
    <property type="project" value="TAIR"/>
</dbReference>
<dbReference type="GO" id="GO:0006891">
    <property type="term" value="P:intra-Golgi vesicle-mediated transport"/>
    <property type="evidence" value="ECO:0007669"/>
    <property type="project" value="InterPro"/>
</dbReference>
<dbReference type="GO" id="GO:0009860">
    <property type="term" value="P:pollen tube growth"/>
    <property type="evidence" value="ECO:0000315"/>
    <property type="project" value="TAIR"/>
</dbReference>
<dbReference type="GO" id="GO:0015031">
    <property type="term" value="P:protein transport"/>
    <property type="evidence" value="ECO:0007669"/>
    <property type="project" value="UniProtKB-KW"/>
</dbReference>
<dbReference type="InterPro" id="IPR010490">
    <property type="entry name" value="COG6"/>
</dbReference>
<dbReference type="InterPro" id="IPR048369">
    <property type="entry name" value="COG6_C"/>
</dbReference>
<dbReference type="InterPro" id="IPR048368">
    <property type="entry name" value="COG6_N"/>
</dbReference>
<dbReference type="PANTHER" id="PTHR21506">
    <property type="entry name" value="COMPONENT OF OLIGOMERIC GOLGI COMPLEX 6"/>
    <property type="match status" value="1"/>
</dbReference>
<dbReference type="PANTHER" id="PTHR21506:SF0">
    <property type="entry name" value="CONSERVED OLIGOMERIC GOLGI COMPLEX SUBUNIT 6"/>
    <property type="match status" value="1"/>
</dbReference>
<dbReference type="Pfam" id="PF20653">
    <property type="entry name" value="COG6_C"/>
    <property type="match status" value="1"/>
</dbReference>
<dbReference type="Pfam" id="PF06419">
    <property type="entry name" value="COG6_N"/>
    <property type="match status" value="1"/>
</dbReference>
<dbReference type="SMART" id="SM01087">
    <property type="entry name" value="COG6"/>
    <property type="match status" value="1"/>
</dbReference>
<gene>
    <name evidence="4" type="primary">COG6</name>
    <name evidence="7" type="ordered locus">At1g31780</name>
    <name evidence="8" type="ORF">F5M6.21</name>
</gene>
<proteinExistence type="evidence at protein level"/>